<proteinExistence type="evidence at protein level"/>
<sequence length="99" mass="10773">MSGRKETVLDLAKFVDKGVQVKLTGGRQVTGTLKGYDQLLNLVLDEAVEFVRDHDDPLKTTDQTRRLGLIVCRGTAVMLVSPTDGTEEIANPFVTAEAV</sequence>
<feature type="chain" id="PRO_0000431650" description="Sm-like protein LSM7">
    <location>
        <begin position="1"/>
        <end position="99"/>
    </location>
</feature>
<feature type="domain" description="Sm" evidence="1">
    <location>
        <begin position="6"/>
        <end position="86"/>
    </location>
</feature>
<protein>
    <recommendedName>
        <fullName evidence="6">Sm-like protein LSM7</fullName>
        <shortName evidence="5">AtLSM7</shortName>
    </recommendedName>
    <alternativeName>
        <fullName evidence="6">Protein EMBRYO DEFECTIVE 2816</fullName>
    </alternativeName>
    <alternativeName>
        <fullName evidence="6">U6 snRNA-associated Sm-like protein LSM7</fullName>
    </alternativeName>
</protein>
<dbReference type="EMBL" id="AC007196">
    <property type="protein sequence ID" value="AAD24820.1"/>
    <property type="molecule type" value="Genomic_DNA"/>
</dbReference>
<dbReference type="EMBL" id="CP002685">
    <property type="protein sequence ID" value="AEC05760.1"/>
    <property type="molecule type" value="Genomic_DNA"/>
</dbReference>
<dbReference type="EMBL" id="CP002685">
    <property type="protein sequence ID" value="AEC05761.1"/>
    <property type="molecule type" value="Genomic_DNA"/>
</dbReference>
<dbReference type="EMBL" id="BT003087">
    <property type="protein sequence ID" value="AAO23652.1"/>
    <property type="molecule type" value="mRNA"/>
</dbReference>
<dbReference type="EMBL" id="AK227358">
    <property type="protein sequence ID" value="BAE99367.1"/>
    <property type="molecule type" value="mRNA"/>
</dbReference>
<dbReference type="PIR" id="B84453">
    <property type="entry name" value="B84453"/>
</dbReference>
<dbReference type="RefSeq" id="NP_178480.1">
    <property type="nucleotide sequence ID" value="NM_126432.3"/>
</dbReference>
<dbReference type="RefSeq" id="NP_849931.1">
    <property type="nucleotide sequence ID" value="NM_179600.3"/>
</dbReference>
<dbReference type="SMR" id="Q9SI54"/>
<dbReference type="ComplexPortal" id="CPX-1308">
    <property type="entry name" value="LSM1-7-PAT1 complex, variant LSM1A-LSM3A-LSM6A-PAT1"/>
</dbReference>
<dbReference type="ComplexPortal" id="CPX-1309">
    <property type="entry name" value="LSM2-8 complex, variant LSM3A-LSM6A"/>
</dbReference>
<dbReference type="ComplexPortal" id="CPX-1345">
    <property type="entry name" value="LSM1-7-PAT1 complex, variant LSM1A-LSM3B-LSM6B-PAT1"/>
</dbReference>
<dbReference type="ComplexPortal" id="CPX-1346">
    <property type="entry name" value="LSM1-7-PAT1 complex, variant LSM1A-LSM3B-LSM6A-PAT1"/>
</dbReference>
<dbReference type="ComplexPortal" id="CPX-1347">
    <property type="entry name" value="LSM1-7-PAT1 complex, variant LSM1B-LSM3A-LSM6A-PAT1"/>
</dbReference>
<dbReference type="ComplexPortal" id="CPX-1348">
    <property type="entry name" value="LSM1-7-PAT1 complex, variant LSM1B-LSM3B-LSM6A-PAT1"/>
</dbReference>
<dbReference type="ComplexPortal" id="CPX-1349">
    <property type="entry name" value="LSM1-7-PAT1 complex, variant LSM1B-LSM3B-LSM6B-PAT1"/>
</dbReference>
<dbReference type="ComplexPortal" id="CPX-1350">
    <property type="entry name" value="LSM1-7-PAT1 complex, variant LSM1B-LSM3A-LSM6B-PAT1"/>
</dbReference>
<dbReference type="ComplexPortal" id="CPX-1351">
    <property type="entry name" value="LSM1-7-PAT1 complex, variant LSM1A-LSM3A-LSM6B-PAT1"/>
</dbReference>
<dbReference type="ComplexPortal" id="CPX-1352">
    <property type="entry name" value="LSM2-8 complex, variant LSM3A-LSM6B"/>
</dbReference>
<dbReference type="ComplexPortal" id="CPX-1353">
    <property type="entry name" value="LSM2-8 complex, variant LSM3B-LSM6A"/>
</dbReference>
<dbReference type="ComplexPortal" id="CPX-1354">
    <property type="entry name" value="LSM2-8 complex, variant LSM3B-LSM6B"/>
</dbReference>
<dbReference type="ComplexPortal" id="CPX-1391">
    <property type="entry name" value="LSM1-7-PAT1 complex, variant LSM1A-LSM3A-LSM6A-PAT1H1"/>
</dbReference>
<dbReference type="ComplexPortal" id="CPX-1392">
    <property type="entry name" value="LSM1-7-PAT1 complex, variant LSM1A-LSM3A-LSM6B-PAT1H1"/>
</dbReference>
<dbReference type="ComplexPortal" id="CPX-1393">
    <property type="entry name" value="LSM1-7-PAT1 complex, variant LSM1A-LSM3B-LSM6A-PAT1H1"/>
</dbReference>
<dbReference type="ComplexPortal" id="CPX-1394">
    <property type="entry name" value="LSM1-7-PAT1 complex, variant LSM1A-LSM3B-LSM6B-PAT1H1"/>
</dbReference>
<dbReference type="ComplexPortal" id="CPX-1395">
    <property type="entry name" value="LSM1-7-PAT1 complex, variant LSM1B-LSM3A-LSM6A-PAT1H1"/>
</dbReference>
<dbReference type="ComplexPortal" id="CPX-1396">
    <property type="entry name" value="LSM1-7-PAT1 complex, variant LSM1B-LSM3A-LSM6B-PAT1H1"/>
</dbReference>
<dbReference type="ComplexPortal" id="CPX-1397">
    <property type="entry name" value="LSM1-7-PAT1 complex, variant LSM1B-LSM3B-LSM6A-PAT1H1"/>
</dbReference>
<dbReference type="ComplexPortal" id="CPX-1398">
    <property type="entry name" value="LSM1-7-PAT1 complex, variant LSM1B-LSM3B-LSM6B-PAT1H1"/>
</dbReference>
<dbReference type="ComplexPortal" id="CPX-1399">
    <property type="entry name" value="LSM1-7-PAT1 complex, variant LSM1A-LSM3A-LSM6A-PAT1H2"/>
</dbReference>
<dbReference type="ComplexPortal" id="CPX-1400">
    <property type="entry name" value="LSM1-7-PAT1 complex, variant LSM1A-LSM3A-LSM6B-PAT1H2"/>
</dbReference>
<dbReference type="ComplexPortal" id="CPX-1401">
    <property type="entry name" value="LSM1-7-PAT1 complex, variant LSM1A-LSM3B-LSM6A-PAT1H2"/>
</dbReference>
<dbReference type="ComplexPortal" id="CPX-1402">
    <property type="entry name" value="LSM1-7-PAT1 complex, variant LSM1A-LSM3B-LSM6B-PAT1H2"/>
</dbReference>
<dbReference type="ComplexPortal" id="CPX-1403">
    <property type="entry name" value="LSM1-7-PAT1 complex, variant LSM1B-LSM3A-LSM6A-PAT1H2"/>
</dbReference>
<dbReference type="ComplexPortal" id="CPX-1404">
    <property type="entry name" value="LSM1-7-PAT1 complex, variant LSM1B-LSM3A-LSM6B-PAT1H2"/>
</dbReference>
<dbReference type="ComplexPortal" id="CPX-1405">
    <property type="entry name" value="LSM1-7-PAT1 complex, variant LSM1B-LSM3B-LSM6A-PAT1H2"/>
</dbReference>
<dbReference type="ComplexPortal" id="CPX-1406">
    <property type="entry name" value="LSM1-7-PAT1 complex, variant LSM1B-LSM3B-LSM6B-PAT1H2"/>
</dbReference>
<dbReference type="FunCoup" id="Q9SI54">
    <property type="interactions" value="4131"/>
</dbReference>
<dbReference type="IntAct" id="Q9SI54">
    <property type="interactions" value="6"/>
</dbReference>
<dbReference type="STRING" id="3702.Q9SI54"/>
<dbReference type="GlyGen" id="Q9SI54">
    <property type="glycosylation" value="1 site"/>
</dbReference>
<dbReference type="PaxDb" id="3702-AT2G03870.2"/>
<dbReference type="ProteomicsDB" id="238615"/>
<dbReference type="DNASU" id="814913"/>
<dbReference type="EnsemblPlants" id="AT2G03870.1">
    <property type="protein sequence ID" value="AT2G03870.1"/>
    <property type="gene ID" value="AT2G03870"/>
</dbReference>
<dbReference type="EnsemblPlants" id="AT2G03870.2">
    <property type="protein sequence ID" value="AT2G03870.2"/>
    <property type="gene ID" value="AT2G03870"/>
</dbReference>
<dbReference type="GeneID" id="814913"/>
<dbReference type="Gramene" id="AT2G03870.1">
    <property type="protein sequence ID" value="AT2G03870.1"/>
    <property type="gene ID" value="AT2G03870"/>
</dbReference>
<dbReference type="Gramene" id="AT2G03870.2">
    <property type="protein sequence ID" value="AT2G03870.2"/>
    <property type="gene ID" value="AT2G03870"/>
</dbReference>
<dbReference type="KEGG" id="ath:AT2G03870"/>
<dbReference type="Araport" id="AT2G03870"/>
<dbReference type="TAIR" id="AT2G03870">
    <property type="gene designation" value="EMB2816"/>
</dbReference>
<dbReference type="eggNOG" id="KOG1781">
    <property type="taxonomic scope" value="Eukaryota"/>
</dbReference>
<dbReference type="HOGENOM" id="CLU_076902_8_1_1"/>
<dbReference type="InParanoid" id="Q9SI54"/>
<dbReference type="OMA" id="PFVQQEE"/>
<dbReference type="OrthoDB" id="2146at2759"/>
<dbReference type="PhylomeDB" id="Q9SI54"/>
<dbReference type="PRO" id="PR:Q9SI54"/>
<dbReference type="Proteomes" id="UP000006548">
    <property type="component" value="Chromosome 2"/>
</dbReference>
<dbReference type="ExpressionAtlas" id="Q9SI54">
    <property type="expression patterns" value="baseline and differential"/>
</dbReference>
<dbReference type="GO" id="GO:0005829">
    <property type="term" value="C:cytosol"/>
    <property type="evidence" value="ECO:0007005"/>
    <property type="project" value="TAIR"/>
</dbReference>
<dbReference type="GO" id="GO:1990726">
    <property type="term" value="C:Lsm1-7-Pat1 complex"/>
    <property type="evidence" value="ECO:0000303"/>
    <property type="project" value="ComplexPortal"/>
</dbReference>
<dbReference type="GO" id="GO:0120115">
    <property type="term" value="C:Lsm2-8 complex"/>
    <property type="evidence" value="ECO:0000315"/>
    <property type="project" value="ComplexPortal"/>
</dbReference>
<dbReference type="GO" id="GO:0005634">
    <property type="term" value="C:nucleus"/>
    <property type="evidence" value="ECO:0000314"/>
    <property type="project" value="ComplexPortal"/>
</dbReference>
<dbReference type="GO" id="GO:0000932">
    <property type="term" value="C:P-body"/>
    <property type="evidence" value="ECO:0000303"/>
    <property type="project" value="ComplexPortal"/>
</dbReference>
<dbReference type="GO" id="GO:0005681">
    <property type="term" value="C:spliceosomal complex"/>
    <property type="evidence" value="ECO:0007669"/>
    <property type="project" value="UniProtKB-KW"/>
</dbReference>
<dbReference type="GO" id="GO:0003723">
    <property type="term" value="F:RNA binding"/>
    <property type="evidence" value="ECO:0007669"/>
    <property type="project" value="UniProtKB-KW"/>
</dbReference>
<dbReference type="GO" id="GO:0000290">
    <property type="term" value="P:deadenylation-dependent decapping of nuclear-transcribed mRNA"/>
    <property type="evidence" value="ECO:0000269"/>
    <property type="project" value="ComplexPortal"/>
</dbReference>
<dbReference type="GO" id="GO:0000398">
    <property type="term" value="P:mRNA splicing, via spliceosome"/>
    <property type="evidence" value="ECO:0000315"/>
    <property type="project" value="ComplexPortal"/>
</dbReference>
<dbReference type="CDD" id="cd01729">
    <property type="entry name" value="LSm7"/>
    <property type="match status" value="1"/>
</dbReference>
<dbReference type="FunFam" id="2.30.30.100:FF:000034">
    <property type="entry name" value="sm-like protein LSM7"/>
    <property type="match status" value="1"/>
</dbReference>
<dbReference type="Gene3D" id="2.30.30.100">
    <property type="match status" value="1"/>
</dbReference>
<dbReference type="InterPro" id="IPR017132">
    <property type="entry name" value="Lsm7"/>
</dbReference>
<dbReference type="InterPro" id="IPR044641">
    <property type="entry name" value="Lsm7/SmG-like"/>
</dbReference>
<dbReference type="InterPro" id="IPR010920">
    <property type="entry name" value="LSM_dom_sf"/>
</dbReference>
<dbReference type="InterPro" id="IPR047575">
    <property type="entry name" value="Sm"/>
</dbReference>
<dbReference type="InterPro" id="IPR001163">
    <property type="entry name" value="Sm_dom_euk/arc"/>
</dbReference>
<dbReference type="PANTHER" id="PTHR10553">
    <property type="entry name" value="SMALL NUCLEAR RIBONUCLEOPROTEIN"/>
    <property type="match status" value="1"/>
</dbReference>
<dbReference type="PANTHER" id="PTHR10553:SF5">
    <property type="entry name" value="U6 SNRNA-ASSOCIATED SM-LIKE PROTEIN LSM7"/>
    <property type="match status" value="1"/>
</dbReference>
<dbReference type="Pfam" id="PF01423">
    <property type="entry name" value="LSM"/>
    <property type="match status" value="1"/>
</dbReference>
<dbReference type="PIRSF" id="PIRSF037188">
    <property type="entry name" value="U6_snRNA_Lsm7"/>
    <property type="match status" value="1"/>
</dbReference>
<dbReference type="SMART" id="SM00651">
    <property type="entry name" value="Sm"/>
    <property type="match status" value="1"/>
</dbReference>
<dbReference type="SUPFAM" id="SSF50182">
    <property type="entry name" value="Sm-like ribonucleoproteins"/>
    <property type="match status" value="1"/>
</dbReference>
<dbReference type="PROSITE" id="PS52002">
    <property type="entry name" value="SM"/>
    <property type="match status" value="1"/>
</dbReference>
<accession>Q9SI54</accession>
<name>LSM7_ARATH</name>
<gene>
    <name evidence="4" type="primary">LSM7</name>
    <name evidence="6" type="synonym">EMB2816</name>
    <name evidence="7" type="ordered locus">At2g03870</name>
</gene>
<comment type="function">
    <text evidence="2 3">Component of LSM protein complexes, which are involved in RNA processing. Component of the cytoplasmic LSM1-LSM7 complex which is involved in mRNA degradation by promoting decapping and leading to accurate 5'-3' mRNA decay. The cytoplasmic LSM1-LSM7 complex regulates developmental gene expression by the decapping of specific development-related transcripts. Component of the nuclear LSM2-LSM8 complex which is involved splicing nuclear mRNAs. LSM2-LSM8 binds directly to the U6 small nuclear RNAs (snRNAs) and is essential for accurate splicing of selected development-related mRNAs through the stabilization of the spliceosomal U6 snRNA. Plays a critical role in the regulation of development-related gene expression.</text>
</comment>
<comment type="subunit">
    <text evidence="2 3">Component of the heptameric LSM1-LSM7 complex that forms a seven-membered ring structure with a donut shape. The LSM subunits are arranged in the order LSM1, LSM2, LSM3, LSM6, LSM5, LSM7 and LSM4. Component of the heptameric LSM2-LSM8 complex that forms a seven-membered ring structure with a donut shape. The LSM subunits are arranged in the order LSM8, LSM2, LSM3, LSM6, LSM5, LSM7 and LSM4 (PubMed:23221597, PubMed:23620288). LSM7 subunit interacts only with its two neighboring subunits, LSM5 and LSM4 (PubMed:23221597).</text>
</comment>
<comment type="subcellular location">
    <subcellularLocation>
        <location evidence="2">Cytoplasm</location>
    </subcellularLocation>
    <subcellularLocation>
        <location evidence="2">Nucleus</location>
    </subcellularLocation>
</comment>
<comment type="tissue specificity">
    <text evidence="2 3">Expressed in roots, leaves, stems, flowers and siliques.</text>
</comment>
<comment type="similarity">
    <text evidence="6">Belongs to the snRNP Sm proteins family.</text>
</comment>
<organism>
    <name type="scientific">Arabidopsis thaliana</name>
    <name type="common">Mouse-ear cress</name>
    <dbReference type="NCBI Taxonomy" id="3702"/>
    <lineage>
        <taxon>Eukaryota</taxon>
        <taxon>Viridiplantae</taxon>
        <taxon>Streptophyta</taxon>
        <taxon>Embryophyta</taxon>
        <taxon>Tracheophyta</taxon>
        <taxon>Spermatophyta</taxon>
        <taxon>Magnoliopsida</taxon>
        <taxon>eudicotyledons</taxon>
        <taxon>Gunneridae</taxon>
        <taxon>Pentapetalae</taxon>
        <taxon>rosids</taxon>
        <taxon>malvids</taxon>
        <taxon>Brassicales</taxon>
        <taxon>Brassicaceae</taxon>
        <taxon>Camelineae</taxon>
        <taxon>Arabidopsis</taxon>
    </lineage>
</organism>
<evidence type="ECO:0000255" key="1">
    <source>
        <dbReference type="PROSITE-ProRule" id="PRU01346"/>
    </source>
</evidence>
<evidence type="ECO:0000269" key="2">
    <source>
    </source>
</evidence>
<evidence type="ECO:0000269" key="3">
    <source>
    </source>
</evidence>
<evidence type="ECO:0000303" key="4">
    <source>
    </source>
</evidence>
<evidence type="ECO:0000303" key="5">
    <source>
    </source>
</evidence>
<evidence type="ECO:0000305" key="6"/>
<evidence type="ECO:0000312" key="7">
    <source>
        <dbReference type="Araport" id="AT2G03870"/>
    </source>
</evidence>
<keyword id="KW-0963">Cytoplasm</keyword>
<keyword id="KW-0507">mRNA processing</keyword>
<keyword id="KW-0508">mRNA splicing</keyword>
<keyword id="KW-0539">Nucleus</keyword>
<keyword id="KW-1185">Reference proteome</keyword>
<keyword id="KW-0687">Ribonucleoprotein</keyword>
<keyword id="KW-0694">RNA-binding</keyword>
<keyword id="KW-0747">Spliceosome</keyword>
<reference key="1">
    <citation type="journal article" date="1999" name="Nature">
        <title>Sequence and analysis of chromosome 2 of the plant Arabidopsis thaliana.</title>
        <authorList>
            <person name="Lin X."/>
            <person name="Kaul S."/>
            <person name="Rounsley S.D."/>
            <person name="Shea T.P."/>
            <person name="Benito M.-I."/>
            <person name="Town C.D."/>
            <person name="Fujii C.Y."/>
            <person name="Mason T.M."/>
            <person name="Bowman C.L."/>
            <person name="Barnstead M.E."/>
            <person name="Feldblyum T.V."/>
            <person name="Buell C.R."/>
            <person name="Ketchum K.A."/>
            <person name="Lee J.J."/>
            <person name="Ronning C.M."/>
            <person name="Koo H.L."/>
            <person name="Moffat K.S."/>
            <person name="Cronin L.A."/>
            <person name="Shen M."/>
            <person name="Pai G."/>
            <person name="Van Aken S."/>
            <person name="Umayam L."/>
            <person name="Tallon L.J."/>
            <person name="Gill J.E."/>
            <person name="Adams M.D."/>
            <person name="Carrera A.J."/>
            <person name="Creasy T.H."/>
            <person name="Goodman H.M."/>
            <person name="Somerville C.R."/>
            <person name="Copenhaver G.P."/>
            <person name="Preuss D."/>
            <person name="Nierman W.C."/>
            <person name="White O."/>
            <person name="Eisen J.A."/>
            <person name="Salzberg S.L."/>
            <person name="Fraser C.M."/>
            <person name="Venter J.C."/>
        </authorList>
    </citation>
    <scope>NUCLEOTIDE SEQUENCE [LARGE SCALE GENOMIC DNA]</scope>
    <source>
        <strain>cv. Columbia</strain>
    </source>
</reference>
<reference key="2">
    <citation type="journal article" date="2017" name="Plant J.">
        <title>Araport11: a complete reannotation of the Arabidopsis thaliana reference genome.</title>
        <authorList>
            <person name="Cheng C.Y."/>
            <person name="Krishnakumar V."/>
            <person name="Chan A.P."/>
            <person name="Thibaud-Nissen F."/>
            <person name="Schobel S."/>
            <person name="Town C.D."/>
        </authorList>
    </citation>
    <scope>GENOME REANNOTATION</scope>
    <source>
        <strain>cv. Columbia</strain>
    </source>
</reference>
<reference key="3">
    <citation type="journal article" date="2003" name="Science">
        <title>Empirical analysis of transcriptional activity in the Arabidopsis genome.</title>
        <authorList>
            <person name="Yamada K."/>
            <person name="Lim J."/>
            <person name="Dale J.M."/>
            <person name="Chen H."/>
            <person name="Shinn P."/>
            <person name="Palm C.J."/>
            <person name="Southwick A.M."/>
            <person name="Wu H.C."/>
            <person name="Kim C.J."/>
            <person name="Nguyen M."/>
            <person name="Pham P.K."/>
            <person name="Cheuk R.F."/>
            <person name="Karlin-Newmann G."/>
            <person name="Liu S.X."/>
            <person name="Lam B."/>
            <person name="Sakano H."/>
            <person name="Wu T."/>
            <person name="Yu G."/>
            <person name="Miranda M."/>
            <person name="Quach H.L."/>
            <person name="Tripp M."/>
            <person name="Chang C.H."/>
            <person name="Lee J.M."/>
            <person name="Toriumi M.J."/>
            <person name="Chan M.M."/>
            <person name="Tang C.C."/>
            <person name="Onodera C.S."/>
            <person name="Deng J.M."/>
            <person name="Akiyama K."/>
            <person name="Ansari Y."/>
            <person name="Arakawa T."/>
            <person name="Banh J."/>
            <person name="Banno F."/>
            <person name="Bowser L."/>
            <person name="Brooks S.Y."/>
            <person name="Carninci P."/>
            <person name="Chao Q."/>
            <person name="Choy N."/>
            <person name="Enju A."/>
            <person name="Goldsmith A.D."/>
            <person name="Gurjal M."/>
            <person name="Hansen N.F."/>
            <person name="Hayashizaki Y."/>
            <person name="Johnson-Hopson C."/>
            <person name="Hsuan V.W."/>
            <person name="Iida K."/>
            <person name="Karnes M."/>
            <person name="Khan S."/>
            <person name="Koesema E."/>
            <person name="Ishida J."/>
            <person name="Jiang P.X."/>
            <person name="Jones T."/>
            <person name="Kawai J."/>
            <person name="Kamiya A."/>
            <person name="Meyers C."/>
            <person name="Nakajima M."/>
            <person name="Narusaka M."/>
            <person name="Seki M."/>
            <person name="Sakurai T."/>
            <person name="Satou M."/>
            <person name="Tamse R."/>
            <person name="Vaysberg M."/>
            <person name="Wallender E.K."/>
            <person name="Wong C."/>
            <person name="Yamamura Y."/>
            <person name="Yuan S."/>
            <person name="Shinozaki K."/>
            <person name="Davis R.W."/>
            <person name="Theologis A."/>
            <person name="Ecker J.R."/>
        </authorList>
    </citation>
    <scope>NUCLEOTIDE SEQUENCE [LARGE SCALE MRNA]</scope>
    <source>
        <strain>cv. Columbia</strain>
    </source>
</reference>
<reference key="4">
    <citation type="submission" date="2006-07" db="EMBL/GenBank/DDBJ databases">
        <title>Large-scale analysis of RIKEN Arabidopsis full-length (RAFL) cDNAs.</title>
        <authorList>
            <person name="Totoki Y."/>
            <person name="Seki M."/>
            <person name="Ishida J."/>
            <person name="Nakajima M."/>
            <person name="Enju A."/>
            <person name="Kamiya A."/>
            <person name="Narusaka M."/>
            <person name="Shin-i T."/>
            <person name="Nakagawa M."/>
            <person name="Sakamoto N."/>
            <person name="Oishi K."/>
            <person name="Kohara Y."/>
            <person name="Kobayashi M."/>
            <person name="Toyoda A."/>
            <person name="Sakaki Y."/>
            <person name="Sakurai T."/>
            <person name="Iida K."/>
            <person name="Akiyama K."/>
            <person name="Satou M."/>
            <person name="Toyoda T."/>
            <person name="Konagaya A."/>
            <person name="Carninci P."/>
            <person name="Kawai J."/>
            <person name="Hayashizaki Y."/>
            <person name="Shinozaki K."/>
        </authorList>
    </citation>
    <scope>NUCLEOTIDE SEQUENCE [LARGE SCALE MRNA]</scope>
    <source>
        <strain>cv. Columbia</strain>
    </source>
</reference>
<reference key="5">
    <citation type="journal article" date="2012" name="Plant Cell">
        <title>LSM proteins provide accurate splicing and decay of selected transcripts to ensure normal Arabidopsis development.</title>
        <authorList>
            <person name="Perea-Resa C."/>
            <person name="Hernandez-Verdeja T."/>
            <person name="Lopez-Cobollo R."/>
            <person name="del Mar Castellano M."/>
            <person name="Salinas J."/>
        </authorList>
    </citation>
    <scope>FUNCTION</scope>
    <scope>SUBUNIT</scope>
    <scope>INTERACTION WITH LSM4 AND LSM5</scope>
    <scope>SUBCELLULAR LOCATION</scope>
    <scope>TISSUE SPECIFICITY</scope>
    <scope>GENE FAMILY</scope>
</reference>
<reference key="6">
    <citation type="journal article" date="2013" name="Nucleic Acids Res.">
        <title>Arabidopsis thaliana LSM proteins function in mRNA splicing and degradation.</title>
        <authorList>
            <person name="Golisz A."/>
            <person name="Sikorski P.J."/>
            <person name="Kruszka K."/>
            <person name="Kufel J."/>
        </authorList>
    </citation>
    <scope>IDENTIFICATION BY MASS SPECTROMETRY</scope>
    <scope>FUNCTION</scope>
    <scope>SUBUNIT</scope>
    <scope>TISSUE SPECIFICITY</scope>
</reference>